<dbReference type="EC" id="7.1.1.-" evidence="1"/>
<dbReference type="EMBL" id="CP000110">
    <property type="protein sequence ID" value="ABB33979.1"/>
    <property type="molecule type" value="Genomic_DNA"/>
</dbReference>
<dbReference type="RefSeq" id="WP_011363234.1">
    <property type="nucleotide sequence ID" value="NC_007516.1"/>
</dbReference>
<dbReference type="SMR" id="Q3AN53"/>
<dbReference type="STRING" id="110662.Syncc9605_0203"/>
<dbReference type="KEGG" id="syd:Syncc9605_0203"/>
<dbReference type="eggNOG" id="COG0838">
    <property type="taxonomic scope" value="Bacteria"/>
</dbReference>
<dbReference type="HOGENOM" id="CLU_119549_1_1_3"/>
<dbReference type="OrthoDB" id="9791970at2"/>
<dbReference type="GO" id="GO:0030964">
    <property type="term" value="C:NADH dehydrogenase complex"/>
    <property type="evidence" value="ECO:0007669"/>
    <property type="project" value="TreeGrafter"/>
</dbReference>
<dbReference type="GO" id="GO:0031676">
    <property type="term" value="C:plasma membrane-derived thylakoid membrane"/>
    <property type="evidence" value="ECO:0007669"/>
    <property type="project" value="UniProtKB-SubCell"/>
</dbReference>
<dbReference type="GO" id="GO:0008137">
    <property type="term" value="F:NADH dehydrogenase (ubiquinone) activity"/>
    <property type="evidence" value="ECO:0007669"/>
    <property type="project" value="InterPro"/>
</dbReference>
<dbReference type="GO" id="GO:0048038">
    <property type="term" value="F:quinone binding"/>
    <property type="evidence" value="ECO:0007669"/>
    <property type="project" value="UniProtKB-KW"/>
</dbReference>
<dbReference type="GO" id="GO:0019684">
    <property type="term" value="P:photosynthesis, light reaction"/>
    <property type="evidence" value="ECO:0007669"/>
    <property type="project" value="UniProtKB-UniRule"/>
</dbReference>
<dbReference type="Gene3D" id="1.20.58.1610">
    <property type="entry name" value="NADH:ubiquinone/plastoquinone oxidoreductase, chain 3"/>
    <property type="match status" value="1"/>
</dbReference>
<dbReference type="HAMAP" id="MF_01394">
    <property type="entry name" value="NDH1_NuoA"/>
    <property type="match status" value="1"/>
</dbReference>
<dbReference type="InterPro" id="IPR023043">
    <property type="entry name" value="NAD(P)H_OxRDtase_bac/plastid"/>
</dbReference>
<dbReference type="InterPro" id="IPR000440">
    <property type="entry name" value="NADH_UbQ/plastoQ_OxRdtase_su3"/>
</dbReference>
<dbReference type="InterPro" id="IPR038430">
    <property type="entry name" value="NDAH_ubi_oxred_su3_sf"/>
</dbReference>
<dbReference type="PANTHER" id="PTHR11058">
    <property type="entry name" value="NADH-UBIQUINONE OXIDOREDUCTASE CHAIN 3"/>
    <property type="match status" value="1"/>
</dbReference>
<dbReference type="PANTHER" id="PTHR11058:SF9">
    <property type="entry name" value="NADH-UBIQUINONE OXIDOREDUCTASE CHAIN 3"/>
    <property type="match status" value="1"/>
</dbReference>
<dbReference type="Pfam" id="PF00507">
    <property type="entry name" value="Oxidored_q4"/>
    <property type="match status" value="1"/>
</dbReference>
<proteinExistence type="inferred from homology"/>
<reference key="1">
    <citation type="submission" date="2005-07" db="EMBL/GenBank/DDBJ databases">
        <title>Complete sequence of Synechococcus sp. CC9605.</title>
        <authorList>
            <consortium name="US DOE Joint Genome Institute"/>
            <person name="Copeland A."/>
            <person name="Lucas S."/>
            <person name="Lapidus A."/>
            <person name="Barry K."/>
            <person name="Detter J.C."/>
            <person name="Glavina T."/>
            <person name="Hammon N."/>
            <person name="Israni S."/>
            <person name="Pitluck S."/>
            <person name="Schmutz J."/>
            <person name="Martinez M."/>
            <person name="Larimer F."/>
            <person name="Land M."/>
            <person name="Kyrpides N."/>
            <person name="Ivanova N."/>
            <person name="Richardson P."/>
        </authorList>
    </citation>
    <scope>NUCLEOTIDE SEQUENCE [LARGE SCALE GENOMIC DNA]</scope>
    <source>
        <strain>CC9605</strain>
    </source>
</reference>
<accession>Q3AN53</accession>
<protein>
    <recommendedName>
        <fullName evidence="1">NAD(P)H-quinone oxidoreductase subunit 3</fullName>
        <ecNumber evidence="1">7.1.1.-</ecNumber>
    </recommendedName>
    <alternativeName>
        <fullName evidence="1">NAD(P)H dehydrogenase subunit 3</fullName>
    </alternativeName>
    <alternativeName>
        <fullName evidence="1">NADH-plastoquinone oxidoreductase subunit 3</fullName>
    </alternativeName>
    <alternativeName>
        <fullName evidence="1">NDH-1 subunit 3</fullName>
        <shortName evidence="1">NDH-C</shortName>
    </alternativeName>
</protein>
<organism>
    <name type="scientific">Synechococcus sp. (strain CC9605)</name>
    <dbReference type="NCBI Taxonomy" id="110662"/>
    <lineage>
        <taxon>Bacteria</taxon>
        <taxon>Bacillati</taxon>
        <taxon>Cyanobacteriota</taxon>
        <taxon>Cyanophyceae</taxon>
        <taxon>Synechococcales</taxon>
        <taxon>Synechococcaceae</taxon>
        <taxon>Synechococcus</taxon>
    </lineage>
</organism>
<gene>
    <name evidence="1" type="primary">ndhC</name>
    <name type="ordered locus">Syncc9605_0203</name>
</gene>
<comment type="function">
    <text evidence="1">NDH-1 shuttles electrons from an unknown electron donor, via FMN and iron-sulfur (Fe-S) centers, to quinones in the respiratory and/or the photosynthetic chain. The immediate electron acceptor for the enzyme in this species is believed to be plastoquinone. Couples the redox reaction to proton translocation, and thus conserves the redox energy in a proton gradient. Cyanobacterial NDH-1 also plays a role in inorganic carbon-concentration.</text>
</comment>
<comment type="catalytic activity">
    <reaction evidence="1">
        <text>a plastoquinone + NADH + (n+1) H(+)(in) = a plastoquinol + NAD(+) + n H(+)(out)</text>
        <dbReference type="Rhea" id="RHEA:42608"/>
        <dbReference type="Rhea" id="RHEA-COMP:9561"/>
        <dbReference type="Rhea" id="RHEA-COMP:9562"/>
        <dbReference type="ChEBI" id="CHEBI:15378"/>
        <dbReference type="ChEBI" id="CHEBI:17757"/>
        <dbReference type="ChEBI" id="CHEBI:57540"/>
        <dbReference type="ChEBI" id="CHEBI:57945"/>
        <dbReference type="ChEBI" id="CHEBI:62192"/>
    </reaction>
</comment>
<comment type="catalytic activity">
    <reaction evidence="1">
        <text>a plastoquinone + NADPH + (n+1) H(+)(in) = a plastoquinol + NADP(+) + n H(+)(out)</text>
        <dbReference type="Rhea" id="RHEA:42612"/>
        <dbReference type="Rhea" id="RHEA-COMP:9561"/>
        <dbReference type="Rhea" id="RHEA-COMP:9562"/>
        <dbReference type="ChEBI" id="CHEBI:15378"/>
        <dbReference type="ChEBI" id="CHEBI:17757"/>
        <dbReference type="ChEBI" id="CHEBI:57783"/>
        <dbReference type="ChEBI" id="CHEBI:58349"/>
        <dbReference type="ChEBI" id="CHEBI:62192"/>
    </reaction>
</comment>
<comment type="subunit">
    <text evidence="1">NDH-1 can be composed of about 15 different subunits; different subcomplexes with different compositions have been identified which probably have different functions.</text>
</comment>
<comment type="subcellular location">
    <subcellularLocation>
        <location evidence="1">Cellular thylakoid membrane</location>
        <topology evidence="1">Multi-pass membrane protein</topology>
    </subcellularLocation>
</comment>
<comment type="similarity">
    <text evidence="1">Belongs to the complex I subunit 3 family.</text>
</comment>
<name>NU3C_SYNSC</name>
<keyword id="KW-0472">Membrane</keyword>
<keyword id="KW-0520">NAD</keyword>
<keyword id="KW-0521">NADP</keyword>
<keyword id="KW-0618">Plastoquinone</keyword>
<keyword id="KW-0874">Quinone</keyword>
<keyword id="KW-0793">Thylakoid</keyword>
<keyword id="KW-1278">Translocase</keyword>
<keyword id="KW-0812">Transmembrane</keyword>
<keyword id="KW-1133">Transmembrane helix</keyword>
<keyword id="KW-0813">Transport</keyword>
<sequence length="120" mass="13427">MFALPGYDAFLGFLLIAAAVPVLALVTNKLVAPKSRAGERQLTYESGMEPIGGAWIQFNIRYYMFALVFVIFDVETVFLYPWAVAFNRLGLLAFIEALIFIAILLVALAYAWRKGALEWS</sequence>
<evidence type="ECO:0000255" key="1">
    <source>
        <dbReference type="HAMAP-Rule" id="MF_01394"/>
    </source>
</evidence>
<feature type="chain" id="PRO_5000102208" description="NAD(P)H-quinone oxidoreductase subunit 3">
    <location>
        <begin position="1"/>
        <end position="120"/>
    </location>
</feature>
<feature type="transmembrane region" description="Helical" evidence="1">
    <location>
        <begin position="6"/>
        <end position="26"/>
    </location>
</feature>
<feature type="transmembrane region" description="Helical" evidence="1">
    <location>
        <begin position="64"/>
        <end position="84"/>
    </location>
</feature>
<feature type="transmembrane region" description="Helical" evidence="1">
    <location>
        <begin position="89"/>
        <end position="109"/>
    </location>
</feature>